<keyword id="KW-0002">3D-structure</keyword>
<keyword id="KW-0025">Alternative splicing</keyword>
<keyword id="KW-0106">Calcium</keyword>
<keyword id="KW-0131">Cell cycle</keyword>
<keyword id="KW-0132">Cell division</keyword>
<keyword id="KW-0175">Coiled coil</keyword>
<keyword id="KW-0963">Cytoplasm</keyword>
<keyword id="KW-0206">Cytoskeleton</keyword>
<keyword id="KW-0967">Endosome</keyword>
<keyword id="KW-0333">Golgi apparatus</keyword>
<keyword id="KW-0472">Membrane</keyword>
<keyword id="KW-0479">Metal-binding</keyword>
<keyword id="KW-0597">Phosphoprotein</keyword>
<keyword id="KW-1267">Proteomics identification</keyword>
<keyword id="KW-1185">Reference proteome</keyword>
<keyword id="KW-0677">Repeat</keyword>
<keyword id="KW-0813">Transport</keyword>
<reference key="1">
    <citation type="journal article" date="2001" name="J. Biol. Chem.">
        <title>Identification of a novel Rab11/25 binding domain present in eferin and rip proteins.</title>
        <authorList>
            <person name="Prekeris R."/>
            <person name="Davies J.M."/>
            <person name="Scheller R.H."/>
        </authorList>
    </citation>
    <scope>NUCLEOTIDE SEQUENCE [MRNA] (ISOFORM 1)</scope>
</reference>
<reference key="2">
    <citation type="journal article" date="1998" name="DNA Res.">
        <title>Prediction of the coding sequences of unidentified human genes. X. The complete sequences of 100 new cDNA clones from brain which can code for large proteins in vitro.</title>
        <authorList>
            <person name="Ishikawa K."/>
            <person name="Nagase T."/>
            <person name="Suyama M."/>
            <person name="Miyajima N."/>
            <person name="Tanaka A."/>
            <person name="Kotani H."/>
            <person name="Nomura N."/>
            <person name="Ohara O."/>
        </authorList>
    </citation>
    <scope>NUCLEOTIDE SEQUENCE [LARGE SCALE MRNA] (ISOFORM 1)</scope>
    <source>
        <tissue>Brain</tissue>
    </source>
</reference>
<reference key="3">
    <citation type="journal article" date="2004" name="Nat. Genet.">
        <title>Complete sequencing and characterization of 21,243 full-length human cDNAs.</title>
        <authorList>
            <person name="Ota T."/>
            <person name="Suzuki Y."/>
            <person name="Nishikawa T."/>
            <person name="Otsuki T."/>
            <person name="Sugiyama T."/>
            <person name="Irie R."/>
            <person name="Wakamatsu A."/>
            <person name="Hayashi K."/>
            <person name="Sato H."/>
            <person name="Nagai K."/>
            <person name="Kimura K."/>
            <person name="Makita H."/>
            <person name="Sekine M."/>
            <person name="Obayashi M."/>
            <person name="Nishi T."/>
            <person name="Shibahara T."/>
            <person name="Tanaka T."/>
            <person name="Ishii S."/>
            <person name="Yamamoto J."/>
            <person name="Saito K."/>
            <person name="Kawai Y."/>
            <person name="Isono Y."/>
            <person name="Nakamura Y."/>
            <person name="Nagahari K."/>
            <person name="Murakami K."/>
            <person name="Yasuda T."/>
            <person name="Iwayanagi T."/>
            <person name="Wagatsuma M."/>
            <person name="Shiratori A."/>
            <person name="Sudo H."/>
            <person name="Hosoiri T."/>
            <person name="Kaku Y."/>
            <person name="Kodaira H."/>
            <person name="Kondo H."/>
            <person name="Sugawara M."/>
            <person name="Takahashi M."/>
            <person name="Kanda K."/>
            <person name="Yokoi T."/>
            <person name="Furuya T."/>
            <person name="Kikkawa E."/>
            <person name="Omura Y."/>
            <person name="Abe K."/>
            <person name="Kamihara K."/>
            <person name="Katsuta N."/>
            <person name="Sato K."/>
            <person name="Tanikawa M."/>
            <person name="Yamazaki M."/>
            <person name="Ninomiya K."/>
            <person name="Ishibashi T."/>
            <person name="Yamashita H."/>
            <person name="Murakawa K."/>
            <person name="Fujimori K."/>
            <person name="Tanai H."/>
            <person name="Kimata M."/>
            <person name="Watanabe M."/>
            <person name="Hiraoka S."/>
            <person name="Chiba Y."/>
            <person name="Ishida S."/>
            <person name="Ono Y."/>
            <person name="Takiguchi S."/>
            <person name="Watanabe S."/>
            <person name="Yosida M."/>
            <person name="Hotuta T."/>
            <person name="Kusano J."/>
            <person name="Kanehori K."/>
            <person name="Takahashi-Fujii A."/>
            <person name="Hara H."/>
            <person name="Tanase T.-O."/>
            <person name="Nomura Y."/>
            <person name="Togiya S."/>
            <person name="Komai F."/>
            <person name="Hara R."/>
            <person name="Takeuchi K."/>
            <person name="Arita M."/>
            <person name="Imose N."/>
            <person name="Musashino K."/>
            <person name="Yuuki H."/>
            <person name="Oshima A."/>
            <person name="Sasaki N."/>
            <person name="Aotsuka S."/>
            <person name="Yoshikawa Y."/>
            <person name="Matsunawa H."/>
            <person name="Ichihara T."/>
            <person name="Shiohata N."/>
            <person name="Sano S."/>
            <person name="Moriya S."/>
            <person name="Momiyama H."/>
            <person name="Satoh N."/>
            <person name="Takami S."/>
            <person name="Terashima Y."/>
            <person name="Suzuki O."/>
            <person name="Nakagawa S."/>
            <person name="Senoh A."/>
            <person name="Mizoguchi H."/>
            <person name="Goto Y."/>
            <person name="Shimizu F."/>
            <person name="Wakebe H."/>
            <person name="Hishigaki H."/>
            <person name="Watanabe T."/>
            <person name="Sugiyama A."/>
            <person name="Takemoto M."/>
            <person name="Kawakami B."/>
            <person name="Yamazaki M."/>
            <person name="Watanabe K."/>
            <person name="Kumagai A."/>
            <person name="Itakura S."/>
            <person name="Fukuzumi Y."/>
            <person name="Fujimori Y."/>
            <person name="Komiyama M."/>
            <person name="Tashiro H."/>
            <person name="Tanigami A."/>
            <person name="Fujiwara T."/>
            <person name="Ono T."/>
            <person name="Yamada K."/>
            <person name="Fujii Y."/>
            <person name="Ozaki K."/>
            <person name="Hirao M."/>
            <person name="Ohmori Y."/>
            <person name="Kawabata A."/>
            <person name="Hikiji T."/>
            <person name="Kobatake N."/>
            <person name="Inagaki H."/>
            <person name="Ikema Y."/>
            <person name="Okamoto S."/>
            <person name="Okitani R."/>
            <person name="Kawakami T."/>
            <person name="Noguchi S."/>
            <person name="Itoh T."/>
            <person name="Shigeta K."/>
            <person name="Senba T."/>
            <person name="Matsumura K."/>
            <person name="Nakajima Y."/>
            <person name="Mizuno T."/>
            <person name="Morinaga M."/>
            <person name="Sasaki M."/>
            <person name="Togashi T."/>
            <person name="Oyama M."/>
            <person name="Hata H."/>
            <person name="Watanabe M."/>
            <person name="Komatsu T."/>
            <person name="Mizushima-Sugano J."/>
            <person name="Satoh T."/>
            <person name="Shirai Y."/>
            <person name="Takahashi Y."/>
            <person name="Nakagawa K."/>
            <person name="Okumura K."/>
            <person name="Nagase T."/>
            <person name="Nomura N."/>
            <person name="Kikuchi H."/>
            <person name="Masuho Y."/>
            <person name="Yamashita R."/>
            <person name="Nakai K."/>
            <person name="Yada T."/>
            <person name="Nakamura Y."/>
            <person name="Ohara O."/>
            <person name="Isogai T."/>
            <person name="Sugano S."/>
        </authorList>
    </citation>
    <scope>NUCLEOTIDE SEQUENCE [LARGE SCALE MRNA] (ISOFORM 2)</scope>
    <scope>NUCLEOTIDE SEQUENCE [LARGE SCALE MRNA] OF 311-756 (ISOFORM 3)</scope>
    <source>
        <tissue>Cerebellum</tissue>
        <tissue>Testis</tissue>
    </source>
</reference>
<reference key="4">
    <citation type="journal article" date="2001" name="Hum. Mol. Genet.">
        <title>Sequence, structure and pathology of the fully annotated terminal 2 Mb of the short arm of human chromosome 16.</title>
        <authorList>
            <person name="Daniels R.J."/>
            <person name="Peden J.F."/>
            <person name="Lloyd C."/>
            <person name="Horsley S.W."/>
            <person name="Clark K."/>
            <person name="Tufarelli C."/>
            <person name="Kearney L."/>
            <person name="Buckle V.J."/>
            <person name="Doggett N.A."/>
            <person name="Flint J."/>
            <person name="Higgs D.R."/>
        </authorList>
    </citation>
    <scope>NUCLEOTIDE SEQUENCE [LARGE SCALE GENOMIC DNA]</scope>
</reference>
<reference key="5">
    <citation type="journal article" date="2004" name="Nature">
        <title>The sequence and analysis of duplication-rich human chromosome 16.</title>
        <authorList>
            <person name="Martin J."/>
            <person name="Han C."/>
            <person name="Gordon L.A."/>
            <person name="Terry A."/>
            <person name="Prabhakar S."/>
            <person name="She X."/>
            <person name="Xie G."/>
            <person name="Hellsten U."/>
            <person name="Chan Y.M."/>
            <person name="Altherr M."/>
            <person name="Couronne O."/>
            <person name="Aerts A."/>
            <person name="Bajorek E."/>
            <person name="Black S."/>
            <person name="Blumer H."/>
            <person name="Branscomb E."/>
            <person name="Brown N.C."/>
            <person name="Bruno W.J."/>
            <person name="Buckingham J.M."/>
            <person name="Callen D.F."/>
            <person name="Campbell C.S."/>
            <person name="Campbell M.L."/>
            <person name="Campbell E.W."/>
            <person name="Caoile C."/>
            <person name="Challacombe J.F."/>
            <person name="Chasteen L.A."/>
            <person name="Chertkov O."/>
            <person name="Chi H.C."/>
            <person name="Christensen M."/>
            <person name="Clark L.M."/>
            <person name="Cohn J.D."/>
            <person name="Denys M."/>
            <person name="Detter J.C."/>
            <person name="Dickson M."/>
            <person name="Dimitrijevic-Bussod M."/>
            <person name="Escobar J."/>
            <person name="Fawcett J.J."/>
            <person name="Flowers D."/>
            <person name="Fotopulos D."/>
            <person name="Glavina T."/>
            <person name="Gomez M."/>
            <person name="Gonzales E."/>
            <person name="Goodstein D."/>
            <person name="Goodwin L.A."/>
            <person name="Grady D.L."/>
            <person name="Grigoriev I."/>
            <person name="Groza M."/>
            <person name="Hammon N."/>
            <person name="Hawkins T."/>
            <person name="Haydu L."/>
            <person name="Hildebrand C.E."/>
            <person name="Huang W."/>
            <person name="Israni S."/>
            <person name="Jett J."/>
            <person name="Jewett P.B."/>
            <person name="Kadner K."/>
            <person name="Kimball H."/>
            <person name="Kobayashi A."/>
            <person name="Krawczyk M.-C."/>
            <person name="Leyba T."/>
            <person name="Longmire J.L."/>
            <person name="Lopez F."/>
            <person name="Lou Y."/>
            <person name="Lowry S."/>
            <person name="Ludeman T."/>
            <person name="Manohar C.F."/>
            <person name="Mark G.A."/>
            <person name="McMurray K.L."/>
            <person name="Meincke L.J."/>
            <person name="Morgan J."/>
            <person name="Moyzis R.K."/>
            <person name="Mundt M.O."/>
            <person name="Munk A.C."/>
            <person name="Nandkeshwar R.D."/>
            <person name="Pitluck S."/>
            <person name="Pollard M."/>
            <person name="Predki P."/>
            <person name="Parson-Quintana B."/>
            <person name="Ramirez L."/>
            <person name="Rash S."/>
            <person name="Retterer J."/>
            <person name="Ricke D.O."/>
            <person name="Robinson D.L."/>
            <person name="Rodriguez A."/>
            <person name="Salamov A."/>
            <person name="Saunders E.H."/>
            <person name="Scott D."/>
            <person name="Shough T."/>
            <person name="Stallings R.L."/>
            <person name="Stalvey M."/>
            <person name="Sutherland R.D."/>
            <person name="Tapia R."/>
            <person name="Tesmer J.G."/>
            <person name="Thayer N."/>
            <person name="Thompson L.S."/>
            <person name="Tice H."/>
            <person name="Torney D.C."/>
            <person name="Tran-Gyamfi M."/>
            <person name="Tsai M."/>
            <person name="Ulanovsky L.E."/>
            <person name="Ustaszewska A."/>
            <person name="Vo N."/>
            <person name="White P.S."/>
            <person name="Williams A.L."/>
            <person name="Wills P.L."/>
            <person name="Wu J.-R."/>
            <person name="Wu K."/>
            <person name="Yang J."/>
            <person name="DeJong P."/>
            <person name="Bruce D."/>
            <person name="Doggett N.A."/>
            <person name="Deaven L."/>
            <person name="Schmutz J."/>
            <person name="Grimwood J."/>
            <person name="Richardson P."/>
            <person name="Rokhsar D.S."/>
            <person name="Eichler E.E."/>
            <person name="Gilna P."/>
            <person name="Lucas S.M."/>
            <person name="Myers R.M."/>
            <person name="Rubin E.M."/>
            <person name="Pennacchio L.A."/>
        </authorList>
    </citation>
    <scope>NUCLEOTIDE SEQUENCE [LARGE SCALE GENOMIC DNA]</scope>
</reference>
<reference key="6">
    <citation type="journal article" date="2004" name="Genome Res.">
        <title>The status, quality, and expansion of the NIH full-length cDNA project: the Mammalian Gene Collection (MGC).</title>
        <authorList>
            <consortium name="The MGC Project Team"/>
        </authorList>
    </citation>
    <scope>NUCLEOTIDE SEQUENCE [LARGE SCALE MRNA] (ISOFORM 1)</scope>
    <source>
        <tissue>Ovary</tissue>
    </source>
</reference>
<reference key="7">
    <citation type="journal article" date="2003" name="Int. J. Cancer">
        <title>Novel tumor antigens identified by autologous antibody screening of childhood medulloblastoma cDNA libraries.</title>
        <authorList>
            <person name="Behrends U."/>
            <person name="Schneider I."/>
            <person name="Roessler S."/>
            <person name="Frauenknecht H."/>
            <person name="Golbeck A."/>
            <person name="Lechner B."/>
            <person name="Eigenstetter G."/>
            <person name="Zobywalski C."/>
            <person name="Mueller-Weihrich S."/>
            <person name="Graubner U."/>
            <person name="Schmid I."/>
            <person name="Sackerer D."/>
            <person name="Spaeth M."/>
            <person name="Goetz C."/>
            <person name="Prantl F."/>
            <person name="Asmuss H.-P."/>
            <person name="Bise K."/>
            <person name="Mautner J."/>
        </authorList>
    </citation>
    <scope>NUCLEOTIDE SEQUENCE [MRNA] OF 532-756</scope>
</reference>
<reference key="8">
    <citation type="journal article" date="2001" name="J. Biol. Chem.">
        <title>Identification and characterization of a family of Rab11-interacting proteins.</title>
        <authorList>
            <person name="Hales C.M."/>
            <person name="Griner R."/>
            <person name="Hobdy-Henderson K.C."/>
            <person name="Dorn M.C."/>
            <person name="Hardy D."/>
            <person name="Kumar R."/>
            <person name="Navarre J."/>
            <person name="Chan E.K.L."/>
            <person name="Lapierre L.A."/>
            <person name="Goldenring J.R."/>
        </authorList>
    </citation>
    <scope>INTERACTION WITH RAB11A; RAB11B AND RAB25</scope>
    <scope>SUBCELLULAR LOCATION</scope>
</reference>
<reference key="9">
    <citation type="journal article" date="2002" name="Biochem. Biophys. Res. Commun.">
        <title>Rab11-FIP4 interacts with Rab11 in a GTP-dependent manner and its overexpression condenses the Rab11 positive compartment in HeLa cells.</title>
        <authorList>
            <person name="Wallace D.M."/>
            <person name="Lindsay A.J."/>
            <person name="Hendrick A.G."/>
            <person name="McCaffrey M.W."/>
        </authorList>
    </citation>
    <scope>INTERACTION WITH RAB11FIP4</scope>
</reference>
<reference key="10">
    <citation type="journal article" date="2004" name="Biochem. Biophys. Res. Commun.">
        <title>Rab11-FIP3 localises to a Rab11-positive pericentrosomal compartment during interphase and to the cleavage furrow during cytokinesis.</title>
        <authorList>
            <person name="Horgan C.P."/>
            <person name="Walsh M."/>
            <person name="Zurawski T.H."/>
            <person name="McCaffrey M.W."/>
        </authorList>
    </citation>
    <scope>SUBCELLULAR LOCATION</scope>
</reference>
<reference key="11">
    <citation type="journal article" date="2005" name="EMBO J.">
        <title>Rab11-FIP3 and FIP4 interact with Arf6 and the exocyst to control membrane traffic in cytokinesis.</title>
        <authorList>
            <person name="Fielding A.B."/>
            <person name="Schonteich E."/>
            <person name="Matheson J."/>
            <person name="Wilson G."/>
            <person name="Yu X."/>
            <person name="Hickson G.R."/>
            <person name="Srivastava S."/>
            <person name="Baldwin S.A."/>
            <person name="Prekeris R."/>
            <person name="Gould G.W."/>
        </authorList>
    </citation>
    <scope>FUNCTION</scope>
    <scope>SUBCELLULAR LOCATION</scope>
    <scope>INTERACTION WITH EXOC7; RAB11A AND ARF6</scope>
    <scope>MUTAGENESIS OF ILE-738</scope>
    <scope>CAUTION</scope>
</reference>
<reference key="12">
    <citation type="journal article" date="2005" name="Mol. Biol. Cell">
        <title>The FIP3-Rab11 protein complex regulates recycling endosome targeting to the cleavage furrow during late cytokinesis.</title>
        <authorList>
            <person name="Wilson G.M."/>
            <person name="Fielding A.B."/>
            <person name="Simon G.C."/>
            <person name="Yu X."/>
            <person name="Andrews P.D."/>
            <person name="Hames R.S."/>
            <person name="Frey A.M."/>
            <person name="Peden A.A."/>
            <person name="Gould G.W."/>
            <person name="Prekeris R."/>
        </authorList>
    </citation>
    <scope>FUNCTION</scope>
    <scope>SUBCELLULAR LOCATION</scope>
    <scope>INTERACTION WITH RAB11A</scope>
    <scope>MUTAGENESIS OF ILE-738</scope>
</reference>
<reference key="13">
    <citation type="journal article" date="2007" name="Eur. J. Cell Biol.">
        <title>Molecular characterization of Rab11-FIP3 binding to ARF GTPases.</title>
        <authorList>
            <person name="Schonteich E."/>
            <person name="Pilli M."/>
            <person name="Simon G.C."/>
            <person name="Matern H.T."/>
            <person name="Junutula J.R."/>
            <person name="Sentz D."/>
            <person name="Holmes R.K."/>
            <person name="Prekeris R."/>
        </authorList>
    </citation>
    <scope>FUNCTION</scope>
    <scope>INTERACTION WITH RAB11A AND ARF6</scope>
</reference>
<reference key="14">
    <citation type="journal article" date="2007" name="Proc. Natl. Acad. Sci. U.S.A.">
        <title>Identification of Rab11 as a small GTPase binding protein for the Evi5 oncogene.</title>
        <authorList>
            <person name="Westlake C.J."/>
            <person name="Junutula J.R."/>
            <person name="Simon G.C."/>
            <person name="Pilli M."/>
            <person name="Prekeris R."/>
            <person name="Scheller R.H."/>
            <person name="Jackson P.K."/>
            <person name="Eldridge A.G."/>
        </authorList>
    </citation>
    <scope>INTERACTION WITH RAB11A</scope>
</reference>
<reference key="15">
    <citation type="journal article" date="2007" name="Traffic">
        <title>Rab11-FIP3 is critical for the structural integrity of the endosomal recycling compartment.</title>
        <authorList>
            <person name="Horgan C.P."/>
            <person name="Oleksy A."/>
            <person name="Zhdanov A.V."/>
            <person name="Lall P.Y."/>
            <person name="White I.J."/>
            <person name="Khan A.R."/>
            <person name="Futter C.E."/>
            <person name="McCaffrey J.G."/>
            <person name="McCaffrey M.W."/>
        </authorList>
    </citation>
    <scope>FUNCTION</scope>
    <scope>SUBCELLULAR LOCATION</scope>
</reference>
<reference key="16">
    <citation type="journal article" date="2008" name="EMBO J.">
        <title>Sequential Cyk-4 binding to ECT2 and FIP3 regulates cleavage furrow ingression and abscission during cytokinesis.</title>
        <authorList>
            <person name="Simon G.C."/>
            <person name="Schonteich E."/>
            <person name="Wu C.C."/>
            <person name="Piekny A."/>
            <person name="Ekiert D."/>
            <person name="Yu X."/>
            <person name="Gould G.W."/>
            <person name="Glotzer M."/>
            <person name="Prekeris R."/>
        </authorList>
    </citation>
    <scope>FUNCTION</scope>
    <scope>SUBCELLULAR LOCATION</scope>
    <scope>INTERACTION WITH RACGAP1</scope>
</reference>
<reference key="17">
    <citation type="journal article" date="2009" name="Eur. J. Cell Biol.">
        <title>Rab11-FIP3 is a Rab11-binding protein that regulates breast cancer cell motility by modulating the actin cytoskeleton.</title>
        <authorList>
            <person name="Jing J."/>
            <person name="Tarbutton E."/>
            <person name="Wilson G."/>
            <person name="Prekeris R."/>
        </authorList>
    </citation>
    <scope>FUNCTION</scope>
</reference>
<reference key="18">
    <citation type="journal article" date="2010" name="J. Cell Sci.">
        <title>Rab11-FIP3 links the Rab11 GTPase and cytoplasmic dynein to mediate transport to the endosomal-recycling compartment.</title>
        <authorList>
            <person name="Horgan C.P."/>
            <person name="Hanscom S.R."/>
            <person name="Jolly R.S."/>
            <person name="Futter C.E."/>
            <person name="McCaffrey M.W."/>
        </authorList>
    </citation>
    <scope>FUNCTION</scope>
    <scope>INTERACTION WITH DYNC1LI1</scope>
    <scope>SUBCELLULAR LOCATION</scope>
    <scope>REGION</scope>
    <scope>MUTAGENESIS OF ILE-738</scope>
</reference>
<reference key="19">
    <citation type="journal article" date="2012" name="BMC Cell Biol.">
        <title>Rab11-FIP3 is a cell cycle-regulated phosphoprotein.</title>
        <authorList>
            <person name="Collins L.L."/>
            <person name="Simon G."/>
            <person name="Matheson J."/>
            <person name="Wu C."/>
            <person name="Miller M.C."/>
            <person name="Otani T."/>
            <person name="Yu X."/>
            <person name="Hayashi S."/>
            <person name="Prekeris R."/>
            <person name="Gould G.W."/>
        </authorList>
    </citation>
    <scope>PHOSPHORYLATION AT SER-102; SER-281; SER-348; SER-488; SER-538; SER-647 AND SER-648</scope>
</reference>
<reference key="20">
    <citation type="journal article" date="2013" name="J. Proteome Res.">
        <title>Toward a comprehensive characterization of a human cancer cell phosphoproteome.</title>
        <authorList>
            <person name="Zhou H."/>
            <person name="Di Palma S."/>
            <person name="Preisinger C."/>
            <person name="Peng M."/>
            <person name="Polat A.N."/>
            <person name="Heck A.J."/>
            <person name="Mohammed S."/>
        </authorList>
    </citation>
    <scope>PHOSPHORYLATION [LARGE SCALE ANALYSIS] AT SER-52 AND SER-102</scope>
    <scope>IDENTIFICATION BY MASS SPECTROMETRY [LARGE SCALE ANALYSIS]</scope>
    <source>
        <tissue>Erythroleukemia</tissue>
    </source>
</reference>
<reference key="21">
    <citation type="journal article" date="2014" name="Science">
        <title>Activation of cytoplasmic dynein motility by dynactin-cargo adapter complexes.</title>
        <authorList>
            <person name="McKenney R.J."/>
            <person name="Huynh W."/>
            <person name="Tanenbaum M.E."/>
            <person name="Bhabha G."/>
            <person name="Vale R.D."/>
        </authorList>
    </citation>
    <scope>FUNCTION</scope>
    <scope>INTERACTION WITH DYNEIN INTERMEDIATE CHAIN AND DCTN1</scope>
</reference>
<reference key="22">
    <citation type="journal article" date="2015" name="J. Cell Sci.">
        <title>The Arf and Rab11 effector FIP3 acts synergistically with ASAP1 to direct Rabin8 in ciliary receptor targeting.</title>
        <authorList>
            <person name="Wang J."/>
            <person name="Deretic D."/>
        </authorList>
    </citation>
    <scope>FUNCTION</scope>
    <scope>INTERACTION WITH ARF4; RAB11A; RAB3IP; ASAP1 AND RHO</scope>
    <scope>SUBCELLULAR LOCATION</scope>
</reference>
<reference key="23">
    <citation type="journal article" date="2019" name="Dev. Cell">
        <title>Akt Regulates a Rab11-Effector Switch Required for Ciliogenesis.</title>
        <authorList>
            <person name="Walia V."/>
            <person name="Cuenca A."/>
            <person name="Vetter M."/>
            <person name="Insinna C."/>
            <person name="Perera S."/>
            <person name="Lu Q."/>
            <person name="Ritt D.A."/>
            <person name="Semler E."/>
            <person name="Specht S."/>
            <person name="Stauffer J."/>
            <person name="Morrison D.K."/>
            <person name="Lorentzen E."/>
            <person name="Westlake C.J."/>
        </authorList>
    </citation>
    <scope>FUNCTION</scope>
    <scope>INTERACTION WITH RAB11A AND RAB3IP</scope>
</reference>
<reference key="24">
    <citation type="journal article" date="2006" name="J. Mol. Biol.">
        <title>Structural basis for Rab11-mediated recruitment of FIP3 to recycling endosomes.</title>
        <authorList>
            <person name="Eathiraj S."/>
            <person name="Mishra A."/>
            <person name="Prekeris R."/>
            <person name="Lambright D.G."/>
        </authorList>
    </citation>
    <scope>X-RAY CRYSTALLOGRAPHY (1.86 ANGSTROMS) OF 695-756 IN COMPLEX WITH RAB11A</scope>
    <scope>SUBCELLULAR LOCATION</scope>
    <scope>HOMODIMERIZATION</scope>
</reference>
<reference key="25">
    <citation type="journal article" date="2006" name="Proc. Natl. Acad. Sci. U.S.A.">
        <title>Structural basis for Rab11-dependent membrane recruitment of a family of Rab11-interacting protein 3 (FIP3)/Arfophilin-1.</title>
        <authorList>
            <person name="Shiba T."/>
            <person name="Koga H."/>
            <person name="Shin H.-W."/>
            <person name="Kawasaki M."/>
            <person name="Kato R."/>
            <person name="Nakayama K."/>
            <person name="Wakatsuki S."/>
        </authorList>
    </citation>
    <scope>X-RAY CRYSTALLOGRAPHY (1.75 ANGSTROMS) OF 715-756 IN COMPLEX WITH RAB11A</scope>
    <scope>DOMAIN RBD-FIP</scope>
    <scope>HOMODIMERIZATION</scope>
    <scope>INTERACTION WITH RAB11A; ARF5 AND ARF6</scope>
    <scope>MUTAGENESIS OF TYR-737; ASP-739; MET-746 AND GLU-747</scope>
</reference>
<reference evidence="32 33" key="26">
    <citation type="journal article" date="2015" name="Nat. Struct. Mol. Biol.">
        <title>Structure of Rab11-FIP3-Rabin8 reveals simultaneous binding of FIP3 and Rabin8 effectors to Rab11.</title>
        <authorList>
            <person name="Vetter M."/>
            <person name="Stehle R."/>
            <person name="Basquin C."/>
            <person name="Lorentzen E."/>
        </authorList>
    </citation>
    <scope>X-RAY CRYSTALLOGRAPHY (3.00 ANGSTROMS) OF 695-756</scope>
    <scope>IN COMPLEX WITH RAB11A AND RAB3IP</scope>
    <scope>FUNCTION</scope>
</reference>
<name>RFIP3_HUMAN</name>
<feature type="chain" id="PRO_0000073879" description="Rab11 family-interacting protein 3">
    <location>
        <begin position="1"/>
        <end position="756"/>
    </location>
</feature>
<feature type="domain" description="EF-hand 1" evidence="3">
    <location>
        <begin position="202"/>
        <end position="237"/>
    </location>
</feature>
<feature type="domain" description="EF-hand 2" evidence="3">
    <location>
        <begin position="234"/>
        <end position="269"/>
    </location>
</feature>
<feature type="domain" description="FIP-RBD" evidence="4">
    <location>
        <begin position="694"/>
        <end position="756"/>
    </location>
</feature>
<feature type="region of interest" description="Disordered" evidence="5">
    <location>
        <begin position="1"/>
        <end position="204"/>
    </location>
</feature>
<feature type="region of interest" description="Important for binding to DYNC1LI1" evidence="18">
    <location>
        <begin position="2"/>
        <end position="435"/>
    </location>
</feature>
<feature type="region of interest" description="ARF-binding domain (ABD)">
    <location>
        <begin position="484"/>
        <end position="588"/>
    </location>
</feature>
<feature type="region of interest" description="Disordered" evidence="5">
    <location>
        <begin position="645"/>
        <end position="664"/>
    </location>
</feature>
<feature type="coiled-coil region" evidence="2">
    <location>
        <begin position="485"/>
        <end position="694"/>
    </location>
</feature>
<feature type="compositionally biased region" description="Pro residues" evidence="5">
    <location>
        <begin position="1"/>
        <end position="24"/>
    </location>
</feature>
<feature type="compositionally biased region" description="Low complexity" evidence="5">
    <location>
        <begin position="27"/>
        <end position="39"/>
    </location>
</feature>
<feature type="compositionally biased region" description="Low complexity" evidence="5">
    <location>
        <begin position="53"/>
        <end position="68"/>
    </location>
</feature>
<feature type="compositionally biased region" description="Pro residues" evidence="5">
    <location>
        <begin position="84"/>
        <end position="94"/>
    </location>
</feature>
<feature type="compositionally biased region" description="Basic and acidic residues" evidence="5">
    <location>
        <begin position="654"/>
        <end position="664"/>
    </location>
</feature>
<feature type="binding site" evidence="30">
    <location>
        <position position="215"/>
    </location>
    <ligand>
        <name>Ca(2+)</name>
        <dbReference type="ChEBI" id="CHEBI:29108"/>
        <label>1</label>
    </ligand>
</feature>
<feature type="binding site" evidence="30">
    <location>
        <position position="217"/>
    </location>
    <ligand>
        <name>Ca(2+)</name>
        <dbReference type="ChEBI" id="CHEBI:29108"/>
        <label>1</label>
    </ligand>
</feature>
<feature type="binding site" evidence="30">
    <location>
        <position position="219"/>
    </location>
    <ligand>
        <name>Ca(2+)</name>
        <dbReference type="ChEBI" id="CHEBI:29108"/>
        <label>1</label>
    </ligand>
</feature>
<feature type="binding site" evidence="30">
    <location>
        <position position="226"/>
    </location>
    <ligand>
        <name>Ca(2+)</name>
        <dbReference type="ChEBI" id="CHEBI:29108"/>
        <label>1</label>
    </ligand>
</feature>
<feature type="binding site" evidence="30">
    <location>
        <position position="247"/>
    </location>
    <ligand>
        <name>Ca(2+)</name>
        <dbReference type="ChEBI" id="CHEBI:29108"/>
        <label>2</label>
    </ligand>
</feature>
<feature type="binding site" evidence="30">
    <location>
        <position position="249"/>
    </location>
    <ligand>
        <name>Ca(2+)</name>
        <dbReference type="ChEBI" id="CHEBI:29108"/>
        <label>2</label>
    </ligand>
</feature>
<feature type="binding site" evidence="30">
    <location>
        <position position="258"/>
    </location>
    <ligand>
        <name>Ca(2+)</name>
        <dbReference type="ChEBI" id="CHEBI:29108"/>
        <label>2</label>
    </ligand>
</feature>
<feature type="modified residue" description="Phosphoserine" evidence="34">
    <location>
        <position position="52"/>
    </location>
</feature>
<feature type="modified residue" description="Phosphoserine; by CDK1" evidence="19 34">
    <location>
        <position position="102"/>
    </location>
</feature>
<feature type="modified residue" description="Phosphoserine" evidence="19">
    <location>
        <position position="281"/>
    </location>
</feature>
<feature type="modified residue" description="Phosphoserine" evidence="19">
    <location>
        <position position="348"/>
    </location>
</feature>
<feature type="modified residue" description="Phosphoserine" evidence="19">
    <location>
        <position position="488"/>
    </location>
</feature>
<feature type="modified residue" description="Phosphoserine" evidence="19">
    <location>
        <position position="538"/>
    </location>
</feature>
<feature type="modified residue" description="Phosphoserine" evidence="19">
    <location>
        <position position="647"/>
    </location>
</feature>
<feature type="modified residue" description="Phosphoserine" evidence="19">
    <location>
        <position position="648"/>
    </location>
</feature>
<feature type="splice variant" id="VSP_038664" description="In isoform 2." evidence="26">
    <location>
        <begin position="1"/>
        <end position="296"/>
    </location>
</feature>
<feature type="splice variant" id="VSP_038665" description="In isoform 2." evidence="26">
    <original>FVTYE</original>
    <variation>MPFLK</variation>
    <location>
        <begin position="297"/>
        <end position="301"/>
    </location>
</feature>
<feature type="splice variant" id="VSP_038666" description="In isoform 3." evidence="26">
    <original>P</original>
    <variation>PSTDPLAAKLHSILTDEAFEFYCSQCHKQINRLEDLSARLSDLEMN</variation>
    <location>
        <position position="421"/>
    </location>
</feature>
<feature type="mutagenesis site" description="Abolishes Rab11-binding." evidence="12">
    <original>Y</original>
    <variation>S</variation>
    <location>
        <position position="737"/>
    </location>
</feature>
<feature type="mutagenesis site" description="Abolishes Rab11-binding. Capable of binding to DYNC1LI1. Impaired trafficking towards the pericentrosomal endosomal recycling compartment (ERC)." evidence="9 10 18">
    <original>I</original>
    <variation>E</variation>
    <location>
        <position position="738"/>
    </location>
</feature>
<feature type="mutagenesis site" description="Abolishes Rab11-binding." evidence="12">
    <original>D</original>
    <variation>A</variation>
    <location>
        <position position="739"/>
    </location>
</feature>
<feature type="mutagenesis site" description="Abolishes Rab11-binding." evidence="12">
    <original>M</original>
    <variation>S</variation>
    <location>
        <position position="746"/>
    </location>
</feature>
<feature type="mutagenesis site" description="Abolishes Rab11-binding." evidence="12">
    <original>E</original>
    <variation>A</variation>
    <location>
        <position position="747"/>
    </location>
</feature>
<feature type="helix" evidence="36">
    <location>
        <begin position="704"/>
        <end position="709"/>
    </location>
</feature>
<feature type="helix" evidence="35">
    <location>
        <begin position="717"/>
        <end position="746"/>
    </location>
</feature>
<feature type="helix" evidence="35">
    <location>
        <begin position="750"/>
        <end position="753"/>
    </location>
</feature>
<accession>O75154</accession>
<accession>B0QYI8</accession>
<accession>B0QYT8</accession>
<accession>B1AHQ0</accession>
<accession>B4DEI7</accession>
<accession>B4DZR6</accession>
<accession>Q4VXV7</accession>
<accession>Q7Z5E9</accession>
<accession>Q9H155</accession>
<accession>Q9H1G0</accession>
<accession>Q9NUI0</accession>
<protein>
    <recommendedName>
        <fullName evidence="25">Rab11 family-interacting protein 3</fullName>
        <shortName evidence="29">FIP3</shortName>
        <shortName evidence="27">FIP3-Rab11</shortName>
        <shortName evidence="25">Rab11-FIP3</shortName>
    </recommendedName>
    <alternativeName>
        <fullName evidence="28">Arfophilin-1</fullName>
    </alternativeName>
    <alternativeName>
        <fullName evidence="24">EF hands-containing Rab-interacting protein</fullName>
        <shortName evidence="24">Eferin</shortName>
    </alternativeName>
    <alternativeName>
        <fullName>MU-MB-17.148</fullName>
    </alternativeName>
</protein>
<proteinExistence type="evidence at protein level"/>
<sequence length="756" mass="82440">MASAPPASPPGSEPPGPDPEPGGPDGPGAAQLAPGPAELRLGAPVGGPDPQSPGLDEPAPGAAADGGARWSAGPAPGLEGGPRDPGPSAPPPRSGPRGQLASPDAPGPGPRSEAPLPELDPLFSWTEEPEECGPASCPESAPFRLQGSSSSHRARGEVDVFSPFPAPTAGELALEQGPGSPPQPSDLSQTHPLPSEPVGSQEDGPRLRAVFDALDGDGDGFVRIEDFIQFATVYGAEQVKDLTKYLDPSGLGVISFEDFYQGITAIRNGDPDGQCYGGVASAQDEEPLACPDEFDDFVTYEANEVTDSAYMGSESTYSECETFTDEDTSTLVHPELQPEGDADSAGGSAVPSECLDAMEEPDHGALLLLPGRPHPHGQSVITVIGGEEHFEDYGEGSEAELSPETLCNGQLGCSDPAFLTPSPTKRLSSKKVARYLHQSGALTMEALEDPSPELMEGPEEDIADKVVFLERRVLELEKDTAATGEQHSRLRQENLQLVHRANALEEQLKEQELRACEMVLEETRRQKELLCKMEREKSIEIENLQTRLQQLDEENSELRSCTPCLKANIERLEEEKQKLLDEIESLTLRLSEEQENKRRMGDRLSHERHQFQRDKEATQELIEDLRKQLEHLQLLKLEAEQRRGRSSSMGLQEYHSRARESELEQEVRRLKQDNRNLKEQNEELNGQIITLSIQGAKSLFSTAFSESLAAEISSVSRDELMEAIQKQEEINFRLQDYIDRIIVAIMETNPSILEVK</sequence>
<gene>
    <name evidence="31" type="primary">RAB11FIP3</name>
    <name type="synonym">ARFO1</name>
    <name type="synonym">KIAA0665</name>
</gene>
<organism>
    <name type="scientific">Homo sapiens</name>
    <name type="common">Human</name>
    <dbReference type="NCBI Taxonomy" id="9606"/>
    <lineage>
        <taxon>Eukaryota</taxon>
        <taxon>Metazoa</taxon>
        <taxon>Chordata</taxon>
        <taxon>Craniata</taxon>
        <taxon>Vertebrata</taxon>
        <taxon>Euteleostomi</taxon>
        <taxon>Mammalia</taxon>
        <taxon>Eutheria</taxon>
        <taxon>Euarchontoglires</taxon>
        <taxon>Primates</taxon>
        <taxon>Haplorrhini</taxon>
        <taxon>Catarrhini</taxon>
        <taxon>Hominidae</taxon>
        <taxon>Homo</taxon>
    </lineage>
</organism>
<comment type="function">
    <text evidence="1 9 10 14 15 16 17 18 20 21 22 23">Downstream effector molecule for Rab11 GTPase which is involved in endocytic trafficking, cytokinesis and intracellular ciliogenesis by participating in membrane delivery (PubMed:15601896, PubMed:16148947, PubMed:17394487, PubMed:17628206, PubMed:18511905, PubMed:19327867, PubMed:20026645, PubMed:25673879, PubMed:26258637, PubMed:31204173). Recruited by Rab11 to endosomes where it links Rab11 to dynein motor complex (PubMed:20026645). The functional Rab11-RAB11FIP3-dynein complex regulates the movement of peripheral sorting endosomes (SE) along microtubule tracks toward the microtubule organizing center/centrosome, generating the endocytic recycling compartment (ERC) during interphase of cell cycle (PubMed:17394487, PubMed:20026645). Facilitates the interaction between dynein and dynactin and activates dynein processivity (PubMed:25035494). Binding with ASAP1 is needed to regulate the pericentrosomal localization of recycling endosomes (By similarity). The Rab11-RAB11FIP3 complex is also implicated in the transport during telophase of vesicles derived from recycling endosomes to the cleavage furrow via centrosome-anchored microtubules, where the vesicles function to deliver membrane during late cytokinesis and abscission (PubMed:15601896, PubMed:16148947). The recruitment of Rab11-RAB11FIP3-containing endosomes to the cleavage furrow and tethering to the midbody is co-mediated by RAB11FIP3 interaction with ARF6-exocyst and RACGAP1-MKLP1 tethering complexes (PubMed:17628206, PubMed:18511905). Also involved in the Rab11-Rabin8-Rab8 ciliogenesis cascade by facilitating the orderly assembly of a ciliary targeting complex containing Rab11, ASAP1, Rabin8/RAB3IP, RAB11FIP3 and ARF4, which directs preciliary vesicle trafficking to mother centriole and ciliogenesis initiation (PubMed:26258637, PubMed:31204173). Also promotes the activity of Rab11 and ASAP1 in the ARF4-dependent Golgi-to-cilia transport of the sensory receptor rhodopsin (PubMed:25673879). Competes with WDR44 for binding to Rab11, which controls intracellular ciliogenesis pathway (PubMed:31204173). May play a role in breast cancer cell motility by regulating actin cytoskeleton (PubMed:19327867).</text>
</comment>
<comment type="subunit">
    <text evidence="6 7 9 10 11 12 13 15 16 18 20 21 22 23">Homodimer (PubMed:17007872, PubMed:17030804). Interacts with RAB11A; the interaction is direct and is required for the recruitment to endosomes (PubMed:11495908, PubMed:15601896, PubMed:17030804, PubMed:17229837, PubMed:31204173). Interacts with RAB11B (PubMed:11495908). Forms a ternary complex with RAB11A and dynein intermediate chain DYNC1LI1; RAB11FIP3 links RAB11A to dynein and the interaction regulates endocytic trafficking (PubMed:20026645). Interacts with dynein intermediate chain and dynactin (DCTN1); the interaction activates dynein processivity (PubMed:25035494). Interacts with ARF6 and EXOC7; the interaction serves for recruitment and tethering of recycling endosomes-derived vesicles to the cleavage furrow/midbody (PubMed:16148947, PubMed:17030804, PubMed:17628206). Interacts with RACGAP1/MgcRacGAP; the interaction occurs at late telophase and is required for recruitment and tethering of recycling endosomes-derived vesicles to the cleavage furrow/midbody (PubMed:18511905). Forms a complex with RAB11A and Rabin8/RAB3IP, probably a heterohexamer with two of each protein subunit, where RAB3IP and RAB11FIP3 simultaneously bind to RAB11A; the complex promotes preciliary trafficking (PubMed:26258637, PubMed:31204173). Forms a complex containing RAB11A, ASAP1, RAB3IP, RAP11FIP3 and ARF4; the complex promotes preciliary trafficking; the complex binds to RHO in photoreceptor cells and promotes RHO ciliary transport (PubMed:25673879, PubMed:26258637). Interacts with RAB11FIP4 (PubMed:12470645). Interacts with RAB25 (PubMed:11495908).</text>
</comment>
<comment type="interaction">
    <interactant intactId="EBI-7942186">
        <id>O75154</id>
    </interactant>
    <interactant intactId="EBI-717233">
        <id>Q9H0H5</id>
        <label>RACGAP1</label>
    </interactant>
    <organismsDiffer>false</organismsDiffer>
    <experiments>7</experiments>
</comment>
<comment type="interaction">
    <interactant intactId="EBI-15605207">
        <id>O75154-1</id>
    </interactant>
    <interactant intactId="EBI-1237085">
        <id>P18085</id>
        <label>ARF4</label>
    </interactant>
    <organismsDiffer>false</organismsDiffer>
    <experiments>2</experiments>
</comment>
<comment type="interaction">
    <interactant intactId="EBI-15605207">
        <id>O75154-1</id>
    </interactant>
    <interactant intactId="EBI-745098">
        <id>P62491</id>
        <label>RAB11A</label>
    </interactant>
    <organismsDiffer>false</organismsDiffer>
    <experiments>16</experiments>
</comment>
<comment type="interaction">
    <interactant intactId="EBI-15605207">
        <id>O75154-1</id>
    </interactant>
    <interactant intactId="EBI-747865">
        <id>Q96QF0-2</id>
        <label>RAB3IP</label>
    </interactant>
    <organismsDiffer>false</organismsDiffer>
    <experiments>6</experiments>
</comment>
<comment type="subcellular location">
    <subcellularLocation>
        <location>Endosome membrane</location>
    </subcellularLocation>
    <subcellularLocation>
        <location evidence="6 9 11 14 18">Recycling endosome membrane</location>
        <topology evidence="30">Peripheral membrane protein</topology>
    </subcellularLocation>
    <subcellularLocation>
        <location evidence="8 9 14 16">Cytoplasm</location>
        <location evidence="8 9 14 16">Cytoskeleton</location>
        <location evidence="8 9 14 16">Microtubule organizing center</location>
        <location evidence="8 9 14 16">Centrosome</location>
    </subcellularLocation>
    <subcellularLocation>
        <location evidence="8 9">Cleavage furrow</location>
    </subcellularLocation>
    <subcellularLocation>
        <location evidence="9 10 16">Midbody</location>
    </subcellularLocation>
    <subcellularLocation>
        <location evidence="21">Golgi apparatus membrane</location>
        <topology evidence="30">Peripheral membrane protein</topology>
    </subcellularLocation>
    <subcellularLocation>
        <location evidence="21">Golgi apparatus</location>
        <location evidence="21">trans-Golgi network membrane</location>
        <topology evidence="30">Peripheral membrane protein</topology>
    </subcellularLocation>
    <text evidence="6 9 10 14 16 18 21">During interphase, localized in vesicles continuously moving from peripheral sorting endosomes in the cell towards the pericentrosomal endosomal recycling compartment (ERC) (PubMed:17394487, PubMed:20026645). In early mitosis remains diffuse and distributed through the cell. The onset of anaphase sequesters these vesicles to the centrosomes at the opposite poles of the cell. During telophase these vesicles move from the centrosomes, to the furrow, and then to the midbody to aid in abscission (PubMed:15158446, PubMed:15601896, PubMed:18511905). Interaction with Rab11 mediates localization to endosomes (PubMed:11495908). Interaction with ARF6 mediates localization to the midbody (PubMed:16148947). Localized to the Golgi and TGN when interacting with RHO in photoreceptors (PubMed:25673879). Localized to rhodopsin transport carriers when interacting with RAB11A and ASAP1 in photoreceptors (PubMed:25673879).</text>
</comment>
<comment type="alternative products">
    <event type="alternative splicing"/>
    <isoform>
        <id>O75154-1</id>
        <name>1</name>
        <sequence type="displayed"/>
    </isoform>
    <isoform>
        <id>O75154-2</id>
        <name>2</name>
        <sequence type="described" ref="VSP_038664 VSP_038665"/>
    </isoform>
    <isoform>
        <id>O75154-3</id>
        <name>3</name>
        <sequence type="described" ref="VSP_038666"/>
    </isoform>
</comment>
<comment type="domain">
    <text evidence="12">The RBD-FIP domain mediates the interaction with Rab11 (RAB11A or RAB11B).</text>
</comment>
<comment type="PTM">
    <text evidence="19">Phosphorylated at Ser-102 by CDK1 during metaphase, and dephosphorylated as cells enter telophase.</text>
</comment>
<comment type="caution">
    <text evidence="10 12">Was initially shown not to interact with ARF5 (PubMed:16148947). Another study later demonstrated the interaction (PubMed:17030804).</text>
</comment>
<comment type="sequence caution" evidence="30">
    <conflict type="erroneous initiation">
        <sequence resource="EMBL-CDS" id="BAA31640"/>
    </conflict>
</comment>
<comment type="sequence caution" evidence="30">
    <conflict type="erroneous initiation">
        <sequence resource="EMBL-CDS" id="BAG57098"/>
    </conflict>
</comment>
<dbReference type="EMBL" id="AF395731">
    <property type="protein sequence ID" value="AAL12940.1"/>
    <property type="molecule type" value="mRNA"/>
</dbReference>
<dbReference type="EMBL" id="AB014565">
    <property type="protein sequence ID" value="BAA31640.2"/>
    <property type="status" value="ALT_INIT"/>
    <property type="molecule type" value="mRNA"/>
</dbReference>
<dbReference type="EMBL" id="AK293644">
    <property type="protein sequence ID" value="BAG57098.1"/>
    <property type="status" value="ALT_INIT"/>
    <property type="molecule type" value="mRNA"/>
</dbReference>
<dbReference type="EMBL" id="AK303061">
    <property type="protein sequence ID" value="BAG64178.1"/>
    <property type="molecule type" value="mRNA"/>
</dbReference>
<dbReference type="EMBL" id="AE006463">
    <property type="protein sequence ID" value="AAK61232.1"/>
    <property type="molecule type" value="Genomic_DNA"/>
</dbReference>
<dbReference type="EMBL" id="AL023881">
    <property type="status" value="NOT_ANNOTATED_CDS"/>
    <property type="molecule type" value="Genomic_DNA"/>
</dbReference>
<dbReference type="EMBL" id="AL049542">
    <property type="status" value="NOT_ANNOTATED_CDS"/>
    <property type="molecule type" value="Genomic_DNA"/>
</dbReference>
<dbReference type="EMBL" id="Z98882">
    <property type="status" value="NOT_ANNOTATED_CDS"/>
    <property type="molecule type" value="Genomic_DNA"/>
</dbReference>
<dbReference type="EMBL" id="BC051360">
    <property type="protein sequence ID" value="AAH51360.1"/>
    <property type="molecule type" value="mRNA"/>
</dbReference>
<dbReference type="EMBL" id="AY130007">
    <property type="protein sequence ID" value="AAN05091.1"/>
    <property type="molecule type" value="mRNA"/>
</dbReference>
<dbReference type="CCDS" id="CCDS32351.1">
    <molecule id="O75154-1"/>
</dbReference>
<dbReference type="CCDS" id="CCDS92071.1">
    <molecule id="O75154-3"/>
</dbReference>
<dbReference type="PIR" id="T00367">
    <property type="entry name" value="T00367"/>
</dbReference>
<dbReference type="RefSeq" id="NP_001135744.1">
    <property type="nucleotide sequence ID" value="NM_001142272.1"/>
</dbReference>
<dbReference type="RefSeq" id="NP_001357330.1">
    <molecule id="O75154-3"/>
    <property type="nucleotide sequence ID" value="NM_001370401.1"/>
</dbReference>
<dbReference type="RefSeq" id="NP_055515.1">
    <molecule id="O75154-1"/>
    <property type="nucleotide sequence ID" value="NM_014700.4"/>
</dbReference>
<dbReference type="RefSeq" id="XP_005255770.1">
    <property type="nucleotide sequence ID" value="XM_005255713.3"/>
</dbReference>
<dbReference type="RefSeq" id="XP_005255772.1">
    <property type="nucleotide sequence ID" value="XM_005255715.4"/>
</dbReference>
<dbReference type="RefSeq" id="XP_011521066.1">
    <property type="nucleotide sequence ID" value="XM_011522764.2"/>
</dbReference>
<dbReference type="PDB" id="2D7C">
    <property type="method" value="X-ray"/>
    <property type="resolution" value="1.75 A"/>
    <property type="chains" value="C/D=715-756"/>
</dbReference>
<dbReference type="PDB" id="2HV8">
    <property type="method" value="X-ray"/>
    <property type="resolution" value="1.86 A"/>
    <property type="chains" value="D/E/F=695-756"/>
</dbReference>
<dbReference type="PDB" id="4D0M">
    <property type="method" value="X-ray"/>
    <property type="resolution" value="6.00 A"/>
    <property type="chains" value="E/F/K/L/U/V/a/b/e/f/i/j=713-756"/>
</dbReference>
<dbReference type="PDB" id="4UJ3">
    <property type="method" value="X-ray"/>
    <property type="resolution" value="3.00 A"/>
    <property type="chains" value="C/F/I/L/O/R/U/X=695-756"/>
</dbReference>
<dbReference type="PDB" id="4UJ4">
    <property type="method" value="X-ray"/>
    <property type="resolution" value="4.20 A"/>
    <property type="chains" value="C/F/I/L=695-756"/>
</dbReference>
<dbReference type="PDBsum" id="2D7C"/>
<dbReference type="PDBsum" id="2HV8"/>
<dbReference type="PDBsum" id="4D0M"/>
<dbReference type="PDBsum" id="4UJ3"/>
<dbReference type="PDBsum" id="4UJ4"/>
<dbReference type="SMR" id="O75154"/>
<dbReference type="BioGRID" id="115076">
    <property type="interactions" value="22"/>
</dbReference>
<dbReference type="CORUM" id="O75154"/>
<dbReference type="DIP" id="DIP-47494N"/>
<dbReference type="FunCoup" id="O75154">
    <property type="interactions" value="417"/>
</dbReference>
<dbReference type="IntAct" id="O75154">
    <property type="interactions" value="13"/>
</dbReference>
<dbReference type="MINT" id="O75154"/>
<dbReference type="STRING" id="9606.ENSP00000262305"/>
<dbReference type="GlyGen" id="O75154">
    <property type="glycosylation" value="2 sites, 1 O-linked glycan (1 site)"/>
</dbReference>
<dbReference type="iPTMnet" id="O75154"/>
<dbReference type="PhosphoSitePlus" id="O75154"/>
<dbReference type="BioMuta" id="RAB11FIP3"/>
<dbReference type="jPOST" id="O75154"/>
<dbReference type="MassIVE" id="O75154"/>
<dbReference type="PaxDb" id="9606-ENSP00000262305"/>
<dbReference type="PeptideAtlas" id="O75154"/>
<dbReference type="ProteomicsDB" id="49820">
    <molecule id="O75154-1"/>
</dbReference>
<dbReference type="ProteomicsDB" id="49821">
    <molecule id="O75154-2"/>
</dbReference>
<dbReference type="ProteomicsDB" id="49822">
    <molecule id="O75154-3"/>
</dbReference>
<dbReference type="Antibodypedia" id="22705">
    <property type="antibodies" value="84 antibodies from 25 providers"/>
</dbReference>
<dbReference type="DNASU" id="9727"/>
<dbReference type="Ensembl" id="ENST00000262305.9">
    <molecule id="O75154-1"/>
    <property type="protein sequence ID" value="ENSP00000262305.4"/>
    <property type="gene ID" value="ENSG00000090565.17"/>
</dbReference>
<dbReference type="Ensembl" id="ENST00000434585.6">
    <molecule id="O75154-3"/>
    <property type="protein sequence ID" value="ENSP00000399644.2"/>
    <property type="gene ID" value="ENSG00000090565.17"/>
</dbReference>
<dbReference type="Ensembl" id="ENST00000450428.5">
    <molecule id="O75154-2"/>
    <property type="protein sequence ID" value="ENSP00000415919.1"/>
    <property type="gene ID" value="ENSG00000090565.17"/>
</dbReference>
<dbReference type="Ensembl" id="ENST00000610934.1">
    <molecule id="O75154-2"/>
    <property type="protein sequence ID" value="ENSP00000484620.1"/>
    <property type="gene ID" value="ENSG00000275338.4"/>
</dbReference>
<dbReference type="Ensembl" id="ENST00000611004.4">
    <molecule id="O75154-1"/>
    <property type="protein sequence ID" value="ENSP00000482156.1"/>
    <property type="gene ID" value="ENSG00000275338.4"/>
</dbReference>
<dbReference type="GeneID" id="9727"/>
<dbReference type="KEGG" id="hsa:9727"/>
<dbReference type="MANE-Select" id="ENST00000262305.9">
    <property type="protein sequence ID" value="ENSP00000262305.4"/>
    <property type="RefSeq nucleotide sequence ID" value="NM_014700.4"/>
    <property type="RefSeq protein sequence ID" value="NP_055515.1"/>
</dbReference>
<dbReference type="UCSC" id="uc002chf.4">
    <molecule id="O75154-1"/>
    <property type="organism name" value="human"/>
</dbReference>
<dbReference type="AGR" id="HGNC:17224"/>
<dbReference type="CTD" id="9727"/>
<dbReference type="DisGeNET" id="9727"/>
<dbReference type="GeneCards" id="RAB11FIP3"/>
<dbReference type="HGNC" id="HGNC:17224">
    <property type="gene designation" value="RAB11FIP3"/>
</dbReference>
<dbReference type="HPA" id="ENSG00000090565">
    <property type="expression patterns" value="Tissue enhanced (kidney)"/>
</dbReference>
<dbReference type="MIM" id="608738">
    <property type="type" value="gene"/>
</dbReference>
<dbReference type="neXtProt" id="NX_O75154"/>
<dbReference type="OpenTargets" id="ENSG00000090565"/>
<dbReference type="PharmGKB" id="PA134950896"/>
<dbReference type="VEuPathDB" id="HostDB:ENSG00000090565"/>
<dbReference type="eggNOG" id="KOG0982">
    <property type="taxonomic scope" value="Eukaryota"/>
</dbReference>
<dbReference type="GeneTree" id="ENSGT00440000033742"/>
<dbReference type="HOGENOM" id="CLU_018925_2_0_1"/>
<dbReference type="InParanoid" id="O75154"/>
<dbReference type="OMA" id="NGEHDCR"/>
<dbReference type="OrthoDB" id="418358at2759"/>
<dbReference type="PAN-GO" id="O75154">
    <property type="GO annotations" value="6 GO annotations based on evolutionary models"/>
</dbReference>
<dbReference type="PhylomeDB" id="O75154"/>
<dbReference type="TreeFam" id="TF327221"/>
<dbReference type="PathwayCommons" id="O75154"/>
<dbReference type="Reactome" id="R-HSA-5620916">
    <property type="pathway name" value="VxPx cargo-targeting to cilium"/>
</dbReference>
<dbReference type="SignaLink" id="O75154"/>
<dbReference type="SIGNOR" id="O75154"/>
<dbReference type="BioGRID-ORCS" id="9727">
    <property type="hits" value="31 hits in 1171 CRISPR screens"/>
</dbReference>
<dbReference type="CD-CODE" id="8C2F96ED">
    <property type="entry name" value="Centrosome"/>
</dbReference>
<dbReference type="ChiTaRS" id="RAB11FIP3">
    <property type="organism name" value="human"/>
</dbReference>
<dbReference type="EvolutionaryTrace" id="O75154"/>
<dbReference type="GeneWiki" id="RAB11FIP3"/>
<dbReference type="GenomeRNAi" id="9727"/>
<dbReference type="Pharos" id="O75154">
    <property type="development level" value="Tbio"/>
</dbReference>
<dbReference type="PRO" id="PR:O75154"/>
<dbReference type="Proteomes" id="UP000005640">
    <property type="component" value="Chromosome 16"/>
</dbReference>
<dbReference type="RNAct" id="O75154">
    <property type="molecule type" value="protein"/>
</dbReference>
<dbReference type="Bgee" id="ENSG00000090565">
    <property type="expression patterns" value="Expressed in kidney epithelium and 176 other cell types or tissues"/>
</dbReference>
<dbReference type="ExpressionAtlas" id="O75154">
    <property type="expression patterns" value="baseline and differential"/>
</dbReference>
<dbReference type="GO" id="GO:0034451">
    <property type="term" value="C:centriolar satellite"/>
    <property type="evidence" value="ECO:0000314"/>
    <property type="project" value="HPA"/>
</dbReference>
<dbReference type="GO" id="GO:0005813">
    <property type="term" value="C:centrosome"/>
    <property type="evidence" value="ECO:0000314"/>
    <property type="project" value="UniProtKB"/>
</dbReference>
<dbReference type="GO" id="GO:0036064">
    <property type="term" value="C:ciliary basal body"/>
    <property type="evidence" value="ECO:0000314"/>
    <property type="project" value="HPA"/>
</dbReference>
<dbReference type="GO" id="GO:0005929">
    <property type="term" value="C:cilium"/>
    <property type="evidence" value="ECO:0000314"/>
    <property type="project" value="HPA"/>
</dbReference>
<dbReference type="GO" id="GO:0032154">
    <property type="term" value="C:cleavage furrow"/>
    <property type="evidence" value="ECO:0000314"/>
    <property type="project" value="UniProtKB"/>
</dbReference>
<dbReference type="GO" id="GO:0005829">
    <property type="term" value="C:cytosol"/>
    <property type="evidence" value="ECO:0000304"/>
    <property type="project" value="Reactome"/>
</dbReference>
<dbReference type="GO" id="GO:0030139">
    <property type="term" value="C:endocytic vesicle"/>
    <property type="evidence" value="ECO:0000318"/>
    <property type="project" value="GO_Central"/>
</dbReference>
<dbReference type="GO" id="GO:0030666">
    <property type="term" value="C:endocytic vesicle membrane"/>
    <property type="evidence" value="ECO:0000314"/>
    <property type="project" value="UniProtKB"/>
</dbReference>
<dbReference type="GO" id="GO:0005768">
    <property type="term" value="C:endosome"/>
    <property type="evidence" value="ECO:0000314"/>
    <property type="project" value="UniProtKB"/>
</dbReference>
<dbReference type="GO" id="GO:0000139">
    <property type="term" value="C:Golgi membrane"/>
    <property type="evidence" value="ECO:0000314"/>
    <property type="project" value="UniProtKB"/>
</dbReference>
<dbReference type="GO" id="GO:0045171">
    <property type="term" value="C:intercellular bridge"/>
    <property type="evidence" value="ECO:0000314"/>
    <property type="project" value="HPA"/>
</dbReference>
<dbReference type="GO" id="GO:0043231">
    <property type="term" value="C:intracellular membrane-bounded organelle"/>
    <property type="evidence" value="ECO:0000314"/>
    <property type="project" value="HPA"/>
</dbReference>
<dbReference type="GO" id="GO:0030496">
    <property type="term" value="C:midbody"/>
    <property type="evidence" value="ECO:0000314"/>
    <property type="project" value="UniProtKB"/>
</dbReference>
<dbReference type="GO" id="GO:0005739">
    <property type="term" value="C:mitochondrion"/>
    <property type="evidence" value="ECO:0000314"/>
    <property type="project" value="HPA"/>
</dbReference>
<dbReference type="GO" id="GO:0005654">
    <property type="term" value="C:nucleoplasm"/>
    <property type="evidence" value="ECO:0000314"/>
    <property type="project" value="HPA"/>
</dbReference>
<dbReference type="GO" id="GO:0005886">
    <property type="term" value="C:plasma membrane"/>
    <property type="evidence" value="ECO:0000314"/>
    <property type="project" value="HPA"/>
</dbReference>
<dbReference type="GO" id="GO:0098944">
    <property type="term" value="C:postsynaptic recycling endosome membrane"/>
    <property type="evidence" value="ECO:0007669"/>
    <property type="project" value="Ensembl"/>
</dbReference>
<dbReference type="GO" id="GO:0055037">
    <property type="term" value="C:recycling endosome"/>
    <property type="evidence" value="ECO:0000314"/>
    <property type="project" value="UniProtKB"/>
</dbReference>
<dbReference type="GO" id="GO:0055038">
    <property type="term" value="C:recycling endosome membrane"/>
    <property type="evidence" value="ECO:0000318"/>
    <property type="project" value="GO_Central"/>
</dbReference>
<dbReference type="GO" id="GO:0032588">
    <property type="term" value="C:trans-Golgi network membrane"/>
    <property type="evidence" value="ECO:0000314"/>
    <property type="project" value="UniProtKB"/>
</dbReference>
<dbReference type="GO" id="GO:0005509">
    <property type="term" value="F:calcium ion binding"/>
    <property type="evidence" value="ECO:0007669"/>
    <property type="project" value="InterPro"/>
</dbReference>
<dbReference type="GO" id="GO:0051959">
    <property type="term" value="F:dynein light intermediate chain binding"/>
    <property type="evidence" value="ECO:0000315"/>
    <property type="project" value="UniProtKB"/>
</dbReference>
<dbReference type="GO" id="GO:0042802">
    <property type="term" value="F:identical protein binding"/>
    <property type="evidence" value="ECO:0000314"/>
    <property type="project" value="UniProtKB"/>
</dbReference>
<dbReference type="GO" id="GO:0060090">
    <property type="term" value="F:molecular adaptor activity"/>
    <property type="evidence" value="ECO:0000314"/>
    <property type="project" value="UniProtKB"/>
</dbReference>
<dbReference type="GO" id="GO:0042803">
    <property type="term" value="F:protein homodimerization activity"/>
    <property type="evidence" value="ECO:0000314"/>
    <property type="project" value="UniProtKB"/>
</dbReference>
<dbReference type="GO" id="GO:0044877">
    <property type="term" value="F:protein-containing complex binding"/>
    <property type="evidence" value="ECO:0007669"/>
    <property type="project" value="Ensembl"/>
</dbReference>
<dbReference type="GO" id="GO:0030674">
    <property type="term" value="F:protein-macromolecule adaptor activity"/>
    <property type="evidence" value="ECO:0000314"/>
    <property type="project" value="UniProt"/>
</dbReference>
<dbReference type="GO" id="GO:0031267">
    <property type="term" value="F:small GTPase binding"/>
    <property type="evidence" value="ECO:0000314"/>
    <property type="project" value="UniProtKB"/>
</dbReference>
<dbReference type="GO" id="GO:0051301">
    <property type="term" value="P:cell division"/>
    <property type="evidence" value="ECO:0007669"/>
    <property type="project" value="UniProtKB-KW"/>
</dbReference>
<dbReference type="GO" id="GO:0061502">
    <property type="term" value="P:early endosome to recycling endosome transport"/>
    <property type="evidence" value="ECO:0000315"/>
    <property type="project" value="UniProt"/>
</dbReference>
<dbReference type="GO" id="GO:0032456">
    <property type="term" value="P:endocytic recycling"/>
    <property type="evidence" value="ECO:0000314"/>
    <property type="project" value="UniProtKB"/>
</dbReference>
<dbReference type="GO" id="GO:0043001">
    <property type="term" value="P:Golgi to plasma membrane protein transport"/>
    <property type="evidence" value="ECO:0000315"/>
    <property type="project" value="UniProt"/>
</dbReference>
<dbReference type="GO" id="GO:0070164">
    <property type="term" value="P:negative regulation of adiponectin secretion"/>
    <property type="evidence" value="ECO:0000314"/>
    <property type="project" value="CACAO"/>
</dbReference>
<dbReference type="GO" id="GO:0045724">
    <property type="term" value="P:positive regulation of cilium assembly"/>
    <property type="evidence" value="ECO:0000314"/>
    <property type="project" value="UniProt"/>
</dbReference>
<dbReference type="GO" id="GO:1903438">
    <property type="term" value="P:positive regulation of mitotic cytokinetic process"/>
    <property type="evidence" value="ECO:0000314"/>
    <property type="project" value="UniProt"/>
</dbReference>
<dbReference type="GO" id="GO:0061512">
    <property type="term" value="P:protein localization to cilium"/>
    <property type="evidence" value="ECO:0000315"/>
    <property type="project" value="UniProtKB"/>
</dbReference>
<dbReference type="GO" id="GO:1905345">
    <property type="term" value="P:protein localization to cleavage furrow"/>
    <property type="evidence" value="ECO:0000314"/>
    <property type="project" value="UniProt"/>
</dbReference>
<dbReference type="GO" id="GO:1902017">
    <property type="term" value="P:regulation of cilium assembly"/>
    <property type="evidence" value="ECO:0000314"/>
    <property type="project" value="UniProtKB"/>
</dbReference>
<dbReference type="GO" id="GO:0032465">
    <property type="term" value="P:regulation of cytokinesis"/>
    <property type="evidence" value="ECO:0000315"/>
    <property type="project" value="UniProtKB"/>
</dbReference>
<dbReference type="GO" id="GO:1902954">
    <property type="term" value="P:regulation of early endosome to recycling endosome transport"/>
    <property type="evidence" value="ECO:0000315"/>
    <property type="project" value="UniProtKB"/>
</dbReference>
<dbReference type="GO" id="GO:2001135">
    <property type="term" value="P:regulation of endocytic recycling"/>
    <property type="evidence" value="ECO:0000315"/>
    <property type="project" value="UniProtKB"/>
</dbReference>
<dbReference type="GO" id="GO:1904779">
    <property type="term" value="P:regulation of protein localization to centrosome"/>
    <property type="evidence" value="ECO:0000315"/>
    <property type="project" value="UniProtKB"/>
</dbReference>
<dbReference type="GO" id="GO:0060627">
    <property type="term" value="P:regulation of vesicle-mediated transport"/>
    <property type="evidence" value="ECO:0000315"/>
    <property type="project" value="UniProtKB"/>
</dbReference>
<dbReference type="GO" id="GO:0016192">
    <property type="term" value="P:vesicle-mediated transport"/>
    <property type="evidence" value="ECO:0000315"/>
    <property type="project" value="UniProt"/>
</dbReference>
<dbReference type="FunFam" id="1.20.5.2440:FF:000001">
    <property type="entry name" value="RAB11 family interacting protein 4"/>
    <property type="match status" value="1"/>
</dbReference>
<dbReference type="FunFam" id="1.10.238.10:FF:000227">
    <property type="entry name" value="Rab11 family-interacting protein 3"/>
    <property type="match status" value="1"/>
</dbReference>
<dbReference type="Gene3D" id="1.20.5.2440">
    <property type="match status" value="1"/>
</dbReference>
<dbReference type="Gene3D" id="1.10.238.10">
    <property type="entry name" value="EF-hand"/>
    <property type="match status" value="1"/>
</dbReference>
<dbReference type="InterPro" id="IPR011992">
    <property type="entry name" value="EF-hand-dom_pair"/>
</dbReference>
<dbReference type="InterPro" id="IPR002048">
    <property type="entry name" value="EF_hand_dom"/>
</dbReference>
<dbReference type="InterPro" id="IPR037245">
    <property type="entry name" value="FIP-RBD_C_sf"/>
</dbReference>
<dbReference type="InterPro" id="IPR019018">
    <property type="entry name" value="Rab-bd_FIP-RBD"/>
</dbReference>
<dbReference type="InterPro" id="IPR051977">
    <property type="entry name" value="Rab11-interacting_regulator"/>
</dbReference>
<dbReference type="PANTHER" id="PTHR15726:SF6">
    <property type="entry name" value="RAB11 FAMILY-INTERACTING PROTEIN 3"/>
    <property type="match status" value="1"/>
</dbReference>
<dbReference type="PANTHER" id="PTHR15726">
    <property type="entry name" value="RAB11-FAMILY INTERACTING PROTEIN"/>
    <property type="match status" value="1"/>
</dbReference>
<dbReference type="Pfam" id="PF13499">
    <property type="entry name" value="EF-hand_7"/>
    <property type="match status" value="1"/>
</dbReference>
<dbReference type="Pfam" id="PF25450">
    <property type="entry name" value="Rab11-FIP3"/>
    <property type="match status" value="1"/>
</dbReference>
<dbReference type="Pfam" id="PF09457">
    <property type="entry name" value="RBD-FIP"/>
    <property type="match status" value="1"/>
</dbReference>
<dbReference type="SUPFAM" id="SSF47473">
    <property type="entry name" value="EF-hand"/>
    <property type="match status" value="1"/>
</dbReference>
<dbReference type="SUPFAM" id="SSF144270">
    <property type="entry name" value="Eferin C-derminal domain-like"/>
    <property type="match status" value="1"/>
</dbReference>
<dbReference type="PROSITE" id="PS50222">
    <property type="entry name" value="EF_HAND_2"/>
    <property type="match status" value="2"/>
</dbReference>
<dbReference type="PROSITE" id="PS51511">
    <property type="entry name" value="FIP_RBD"/>
    <property type="match status" value="1"/>
</dbReference>
<evidence type="ECO:0000250" key="1">
    <source>
        <dbReference type="UniProtKB" id="Q8CHD8"/>
    </source>
</evidence>
<evidence type="ECO:0000255" key="2"/>
<evidence type="ECO:0000255" key="3">
    <source>
        <dbReference type="PROSITE-ProRule" id="PRU00448"/>
    </source>
</evidence>
<evidence type="ECO:0000255" key="4">
    <source>
        <dbReference type="PROSITE-ProRule" id="PRU00844"/>
    </source>
</evidence>
<evidence type="ECO:0000256" key="5">
    <source>
        <dbReference type="SAM" id="MobiDB-lite"/>
    </source>
</evidence>
<evidence type="ECO:0000269" key="6">
    <source>
    </source>
</evidence>
<evidence type="ECO:0000269" key="7">
    <source>
    </source>
</evidence>
<evidence type="ECO:0000269" key="8">
    <source>
    </source>
</evidence>
<evidence type="ECO:0000269" key="9">
    <source>
    </source>
</evidence>
<evidence type="ECO:0000269" key="10">
    <source>
    </source>
</evidence>
<evidence type="ECO:0000269" key="11">
    <source>
    </source>
</evidence>
<evidence type="ECO:0000269" key="12">
    <source>
    </source>
</evidence>
<evidence type="ECO:0000269" key="13">
    <source>
    </source>
</evidence>
<evidence type="ECO:0000269" key="14">
    <source>
    </source>
</evidence>
<evidence type="ECO:0000269" key="15">
    <source>
    </source>
</evidence>
<evidence type="ECO:0000269" key="16">
    <source>
    </source>
</evidence>
<evidence type="ECO:0000269" key="17">
    <source>
    </source>
</evidence>
<evidence type="ECO:0000269" key="18">
    <source>
    </source>
</evidence>
<evidence type="ECO:0000269" key="19">
    <source>
    </source>
</evidence>
<evidence type="ECO:0000269" key="20">
    <source>
    </source>
</evidence>
<evidence type="ECO:0000269" key="21">
    <source>
    </source>
</evidence>
<evidence type="ECO:0000269" key="22">
    <source>
    </source>
</evidence>
<evidence type="ECO:0000269" key="23">
    <source>
    </source>
</evidence>
<evidence type="ECO:0000303" key="24">
    <source>
    </source>
</evidence>
<evidence type="ECO:0000303" key="25">
    <source>
    </source>
</evidence>
<evidence type="ECO:0000303" key="26">
    <source>
    </source>
</evidence>
<evidence type="ECO:0000303" key="27">
    <source>
    </source>
</evidence>
<evidence type="ECO:0000303" key="28">
    <source>
    </source>
</evidence>
<evidence type="ECO:0000303" key="29">
    <source>
    </source>
</evidence>
<evidence type="ECO:0000305" key="30"/>
<evidence type="ECO:0000312" key="31">
    <source>
        <dbReference type="HGNC" id="HGNC:17224"/>
    </source>
</evidence>
<evidence type="ECO:0007744" key="32">
    <source>
        <dbReference type="PDB" id="4UJ3"/>
    </source>
</evidence>
<evidence type="ECO:0007744" key="33">
    <source>
        <dbReference type="PDB" id="4UJ4"/>
    </source>
</evidence>
<evidence type="ECO:0007744" key="34">
    <source>
    </source>
</evidence>
<evidence type="ECO:0007829" key="35">
    <source>
        <dbReference type="PDB" id="2D7C"/>
    </source>
</evidence>
<evidence type="ECO:0007829" key="36">
    <source>
        <dbReference type="PDB" id="2HV8"/>
    </source>
</evidence>